<comment type="function">
    <text evidence="4">Involved in the biosynthesis of caffeine in cv. Puer (PubMed:32193380). Involved in the biosynthesis of theacrine in cv. Kucha, a caffeine-like xanthine alkaloid with diverse beneficial biological activities including anti-depressive, sedative, and hypnotic activities, improving learning and memory, increasing exercise activity, and preventing nonalcoholic fatty liver disease (PubMed:32193380). Catalyzes the conversion of 7-methylxanthine (7mX) to theobromine but not able to convert paraxanthine to caffeine (PubMed:32193380).</text>
</comment>
<comment type="catalytic activity">
    <reaction evidence="4">
        <text>7-methylxanthine + S-adenosyl-L-methionine = theobromine + S-adenosyl-L-homocysteine + H(+)</text>
        <dbReference type="Rhea" id="RHEA:24604"/>
        <dbReference type="ChEBI" id="CHEBI:15378"/>
        <dbReference type="ChEBI" id="CHEBI:28946"/>
        <dbReference type="ChEBI" id="CHEBI:48991"/>
        <dbReference type="ChEBI" id="CHEBI:57856"/>
        <dbReference type="ChEBI" id="CHEBI:59789"/>
        <dbReference type="EC" id="2.1.1.159"/>
    </reaction>
    <physiologicalReaction direction="left-to-right" evidence="4">
        <dbReference type="Rhea" id="RHEA:24605"/>
    </physiologicalReaction>
</comment>
<comment type="cofactor">
    <cofactor evidence="2">
        <name>Mg(2+)</name>
        <dbReference type="ChEBI" id="CHEBI:18420"/>
    </cofactor>
    <text evidence="2">Binds 1 Mg(2+) ion per subunit.</text>
</comment>
<comment type="biophysicochemical properties">
    <kinetics>
        <KM evidence="4">162.2 uM for 1,3,7-trimethyluric acid</KM>
        <text evidence="4">kcat is 0.00018 sec(-1) with 1,3,7-trimethyluric acid as substrate.</text>
    </kinetics>
</comment>
<comment type="pathway">
    <text evidence="3">Alkaloid biosynthesis.</text>
</comment>
<comment type="miscellaneous">
    <text evidence="7">Caffeine is catabolized to produce theacrine in Camellia sinensis var. assamica cv. Kucha, but not in cv. Puer.</text>
</comment>
<comment type="similarity">
    <text evidence="6">Belongs to the methyltransferase superfamily. Type-7 methyltransferase family.</text>
</comment>
<organism>
    <name type="scientific">Camellia sinensis var. assamica</name>
    <name type="common">Assam tea</name>
    <name type="synonym">Thea assamica</name>
    <dbReference type="NCBI Taxonomy" id="261999"/>
    <lineage>
        <taxon>Eukaryota</taxon>
        <taxon>Viridiplantae</taxon>
        <taxon>Streptophyta</taxon>
        <taxon>Embryophyta</taxon>
        <taxon>Tracheophyta</taxon>
        <taxon>Spermatophyta</taxon>
        <taxon>Magnoliopsida</taxon>
        <taxon>eudicotyledons</taxon>
        <taxon>Gunneridae</taxon>
        <taxon>Pentapetalae</taxon>
        <taxon>asterids</taxon>
        <taxon>Ericales</taxon>
        <taxon>Theaceae</taxon>
        <taxon>Camellia</taxon>
    </lineage>
</organism>
<reference key="1">
    <citation type="journal article" date="2020" name="Nat. Commun.">
        <title>Identification and characterization of N9-methyltransferase involved in converting caffeine into non-stimulatory theacrine in tea.</title>
        <authorList>
            <person name="Zhang Y.-H."/>
            <person name="Li Y.-F."/>
            <person name="Wang Y."/>
            <person name="Tan L."/>
            <person name="Cao Z.-Q."/>
            <person name="Xie C."/>
            <person name="Xie G."/>
            <person name="Gong H.-B."/>
            <person name="Sun W.-Y."/>
            <person name="Ouyang S.-H."/>
            <person name="Duan W.-J."/>
            <person name="Lu X."/>
            <person name="Ding K."/>
            <person name="Kurihara H."/>
            <person name="Hu D."/>
            <person name="Zhang Z.-M."/>
            <person name="Abe I."/>
            <person name="He R.-R."/>
        </authorList>
    </citation>
    <scope>NUCLEOTIDE SEQUENCE [MRNA]</scope>
    <scope>X-RAY CRYSTALLOGRAPHY (2.49 ANGSTROMS)</scope>
    <scope>FUNCTION</scope>
    <scope>MUTAGENESIS OF HIS-226; THR-241 AND SER-270</scope>
    <scope>CATALYTIC ACTIVITY</scope>
    <scope>PATHWAY</scope>
    <scope>BIOPHYSICOCHEMICAL PROPERTIES</scope>
    <source>
        <strain>cv. Kucha</strain>
    </source>
</reference>
<feature type="chain" id="PRO_0000451782" description="3,7-dimethylxanthine N-methyltransferase CkTbS">
    <location>
        <begin position="1"/>
        <end position="370"/>
    </location>
</feature>
<feature type="binding site" evidence="1">
    <location>
        <position position="24"/>
    </location>
    <ligand>
        <name>S-adenosyl-L-homocysteine</name>
        <dbReference type="ChEBI" id="CHEBI:57856"/>
    </ligand>
</feature>
<feature type="binding site" evidence="1">
    <location>
        <position position="31"/>
    </location>
    <ligand>
        <name>theobromine</name>
        <dbReference type="ChEBI" id="CHEBI:28946"/>
    </ligand>
</feature>
<feature type="binding site" evidence="1">
    <location>
        <position position="67"/>
    </location>
    <ligand>
        <name>S-adenosyl-L-homocysteine</name>
        <dbReference type="ChEBI" id="CHEBI:57856"/>
    </ligand>
</feature>
<feature type="binding site" evidence="1">
    <location>
        <position position="72"/>
    </location>
    <ligand>
        <name>S-adenosyl-L-homocysteine</name>
        <dbReference type="ChEBI" id="CHEBI:57856"/>
    </ligand>
</feature>
<feature type="binding site" evidence="1">
    <location>
        <position position="104"/>
    </location>
    <ligand>
        <name>S-adenosyl-L-homocysteine</name>
        <dbReference type="ChEBI" id="CHEBI:57856"/>
    </ligand>
</feature>
<feature type="binding site" evidence="1">
    <location>
        <position position="105"/>
    </location>
    <ligand>
        <name>S-adenosyl-L-homocysteine</name>
        <dbReference type="ChEBI" id="CHEBI:57856"/>
    </ligand>
</feature>
<feature type="binding site" evidence="1">
    <location>
        <position position="139"/>
    </location>
    <ligand>
        <name>S-adenosyl-L-homocysteine</name>
        <dbReference type="ChEBI" id="CHEBI:57856"/>
    </ligand>
</feature>
<feature type="binding site" evidence="1">
    <location>
        <position position="140"/>
    </location>
    <ligand>
        <name>S-adenosyl-L-homocysteine</name>
        <dbReference type="ChEBI" id="CHEBI:57856"/>
    </ligand>
</feature>
<feature type="binding site" evidence="1">
    <location>
        <position position="157"/>
    </location>
    <ligand>
        <name>theobromine</name>
        <dbReference type="ChEBI" id="CHEBI:28946"/>
    </ligand>
</feature>
<feature type="binding site" evidence="1">
    <location>
        <position position="160"/>
    </location>
    <ligand>
        <name>theobromine</name>
        <dbReference type="ChEBI" id="CHEBI:28946"/>
    </ligand>
</feature>
<feature type="binding site" evidence="1">
    <location>
        <position position="161"/>
    </location>
    <ligand>
        <name>theobromine</name>
        <dbReference type="ChEBI" id="CHEBI:28946"/>
    </ligand>
</feature>
<feature type="binding site" evidence="2">
    <location>
        <position position="178"/>
    </location>
    <ligand>
        <name>Mg(2+)</name>
        <dbReference type="ChEBI" id="CHEBI:18420"/>
    </ligand>
</feature>
<feature type="binding site" evidence="1">
    <location>
        <position position="226"/>
    </location>
    <ligand>
        <name>theobromine</name>
        <dbReference type="ChEBI" id="CHEBI:28946"/>
    </ligand>
</feature>
<feature type="binding site" evidence="2">
    <location>
        <position position="264"/>
    </location>
    <ligand>
        <name>Mg(2+)</name>
        <dbReference type="ChEBI" id="CHEBI:18420"/>
    </ligand>
</feature>
<feature type="binding site" evidence="2">
    <location>
        <position position="266"/>
    </location>
    <ligand>
        <name>Mg(2+)</name>
        <dbReference type="ChEBI" id="CHEBI:18420"/>
    </ligand>
</feature>
<feature type="binding site" evidence="2">
    <location>
        <position position="267"/>
    </location>
    <ligand>
        <name>Mg(2+)</name>
        <dbReference type="ChEBI" id="CHEBI:18420"/>
    </ligand>
</feature>
<feature type="binding site" evidence="1">
    <location>
        <position position="322"/>
    </location>
    <ligand>
        <name>theobromine</name>
        <dbReference type="ChEBI" id="CHEBI:28946"/>
    </ligand>
</feature>
<feature type="site" description="Involved in substrate discrimination" evidence="3">
    <location>
        <position position="154"/>
    </location>
</feature>
<feature type="site" description="Involved in substrate discrimination" evidence="3">
    <location>
        <position position="226"/>
    </location>
</feature>
<feature type="site" description="Involved in substrate discrimination" evidence="3">
    <location>
        <position position="270"/>
    </location>
</feature>
<feature type="site" description="Involved in substrate discrimination" evidence="3">
    <location>
        <position position="318"/>
    </location>
</feature>
<feature type="site" description="Involved in substrate discrimination" evidence="3">
    <location>
        <position position="333"/>
    </location>
</feature>
<feature type="mutagenesis site" description="Slight theacrine synthase activity which mediates the conversion of 1,3,7-trimethyluric acid to theacrine. Moderate theacrine synthase activity; when associated with I-241 and C-270." evidence="4">
    <original>H</original>
    <variation>R</variation>
    <location>
        <position position="226"/>
    </location>
</feature>
<feature type="mutagenesis site" description="Slight theacrine synthase activity which mediates the conversion of 1,3,7-trimethyluric acid to theacrine. Moderate theacrine synthase activity; when associated with R-226 and C-270." evidence="4">
    <original>T</original>
    <variation>I</variation>
    <location>
        <position position="241"/>
    </location>
</feature>
<feature type="mutagenesis site" description="Slight theacrine synthase activity which mediates the conversion of 1,3,7-trimethyluric acid to theacrine. Moderate theacrine synthase activity; when associated with R-226 and I-241." evidence="4">
    <original>S</original>
    <variation>C</variation>
    <location>
        <position position="270"/>
    </location>
</feature>
<feature type="strand" evidence="8">
    <location>
        <begin position="18"/>
        <end position="23"/>
    </location>
</feature>
<feature type="turn" evidence="8">
    <location>
        <begin position="24"/>
        <end position="26"/>
    </location>
</feature>
<feature type="helix" evidence="8">
    <location>
        <begin position="29"/>
        <end position="46"/>
    </location>
</feature>
<feature type="helix" evidence="8">
    <location>
        <begin position="48"/>
        <end position="51"/>
    </location>
</feature>
<feature type="strand" evidence="8">
    <location>
        <begin position="55"/>
        <end position="66"/>
    </location>
</feature>
<feature type="helix" evidence="8">
    <location>
        <begin position="73"/>
        <end position="91"/>
    </location>
</feature>
<feature type="strand" evidence="8">
    <location>
        <begin position="97"/>
        <end position="103"/>
    </location>
</feature>
<feature type="turn" evidence="8">
    <location>
        <begin position="107"/>
        <end position="110"/>
    </location>
</feature>
<feature type="helix" evidence="8">
    <location>
        <begin position="111"/>
        <end position="117"/>
    </location>
</feature>
<feature type="helix" evidence="8">
    <location>
        <begin position="119"/>
        <end position="122"/>
    </location>
</feature>
<feature type="strand" evidence="8">
    <location>
        <begin position="131"/>
        <end position="135"/>
    </location>
</feature>
<feature type="strand" evidence="8">
    <location>
        <begin position="150"/>
        <end position="157"/>
    </location>
</feature>
<feature type="strand" evidence="8">
    <location>
        <begin position="163"/>
        <end position="165"/>
    </location>
</feature>
<feature type="turn" evidence="8">
    <location>
        <begin position="177"/>
        <end position="180"/>
    </location>
</feature>
<feature type="helix" evidence="8">
    <location>
        <begin position="190"/>
        <end position="214"/>
    </location>
</feature>
<feature type="strand" evidence="8">
    <location>
        <begin position="215"/>
        <end position="226"/>
    </location>
</feature>
<feature type="strand" evidence="8">
    <location>
        <begin position="229"/>
        <end position="232"/>
    </location>
</feature>
<feature type="helix" evidence="8">
    <location>
        <begin position="236"/>
        <end position="254"/>
    </location>
</feature>
<feature type="helix" evidence="8">
    <location>
        <begin position="260"/>
        <end position="263"/>
    </location>
</feature>
<feature type="helix" evidence="8">
    <location>
        <begin position="275"/>
        <end position="284"/>
    </location>
</feature>
<feature type="strand" evidence="8">
    <location>
        <begin position="285"/>
        <end position="298"/>
    </location>
</feature>
<feature type="helix" evidence="8">
    <location>
        <begin position="308"/>
        <end position="331"/>
    </location>
</feature>
<feature type="turn" evidence="8">
    <location>
        <begin position="332"/>
        <end position="335"/>
    </location>
</feature>
<feature type="helix" evidence="8">
    <location>
        <begin position="336"/>
        <end position="348"/>
    </location>
</feature>
<feature type="turn" evidence="8">
    <location>
        <begin position="349"/>
        <end position="353"/>
    </location>
</feature>
<feature type="strand" evidence="8">
    <location>
        <begin position="358"/>
        <end position="367"/>
    </location>
</feature>
<name>CKTBS_CAMSB</name>
<gene>
    <name evidence="5" type="primary">TBS</name>
</gene>
<evidence type="ECO:0000250" key="1">
    <source>
        <dbReference type="UniProtKB" id="A0A6C0WW36"/>
    </source>
</evidence>
<evidence type="ECO:0000250" key="2">
    <source>
        <dbReference type="UniProtKB" id="Q9FLN8"/>
    </source>
</evidence>
<evidence type="ECO:0000250" key="3">
    <source>
        <dbReference type="UniProtKB" id="Q9FZN8"/>
    </source>
</evidence>
<evidence type="ECO:0000269" key="4">
    <source>
    </source>
</evidence>
<evidence type="ECO:0000303" key="5">
    <source>
    </source>
</evidence>
<evidence type="ECO:0000305" key="6"/>
<evidence type="ECO:0000305" key="7">
    <source>
    </source>
</evidence>
<evidence type="ECO:0007829" key="8">
    <source>
        <dbReference type="PDB" id="6LYI"/>
    </source>
</evidence>
<sequence length="370" mass="41315">MELATMGKVNEVLFMNGGEGEISYAQNSSFTEKVASMAMPALENAVETLFSKDFHLLPALNAADLGCAAGPNTFAVISMIKRMMEKKCRELYCQTPELQVYLNDLFGNDFNTLFKGLSSEVVGNKCEEVSCYVMGVPGSFHGRLFPRNSLHLVHSSYSVHWLTQAPKGLTSREGLALNKGKIYISKTSPPAVKEAYLSQFHEDFTMFLNARSQEVVPNGCMVLILHGRQSSDPSEMESCFTWELLAIAIAELVSQGLIDEDKLDTFNVPSYFPSLEEVKDIVERDGSFTIDHLEGFELDSLEMQENDKWVRGDKFAKMVRAFTEPIISNQFGHEIMDKLYDKFTHIVVSDLEAELPKTTSIILVLSKIVG</sequence>
<proteinExistence type="evidence at protein level"/>
<dbReference type="EC" id="2.1.1.159" evidence="4"/>
<dbReference type="EMBL" id="MN163830">
    <property type="protein sequence ID" value="QIC50343.1"/>
    <property type="molecule type" value="mRNA"/>
</dbReference>
<dbReference type="PDB" id="6LYI">
    <property type="method" value="X-ray"/>
    <property type="resolution" value="2.49 A"/>
    <property type="chains" value="A/B=1-370"/>
</dbReference>
<dbReference type="PDBsum" id="6LYI"/>
<dbReference type="SMR" id="A0A6C0WX00"/>
<dbReference type="SABIO-RK" id="A0A6C0WX00"/>
<dbReference type="GO" id="GO:0046872">
    <property type="term" value="F:metal ion binding"/>
    <property type="evidence" value="ECO:0007669"/>
    <property type="project" value="UniProtKB-KW"/>
</dbReference>
<dbReference type="GO" id="GO:0008168">
    <property type="term" value="F:methyltransferase activity"/>
    <property type="evidence" value="ECO:0007669"/>
    <property type="project" value="UniProtKB-KW"/>
</dbReference>
<dbReference type="GO" id="GO:0009820">
    <property type="term" value="P:alkaloid metabolic process"/>
    <property type="evidence" value="ECO:0007669"/>
    <property type="project" value="UniProtKB-KW"/>
</dbReference>
<dbReference type="GO" id="GO:0032259">
    <property type="term" value="P:methylation"/>
    <property type="evidence" value="ECO:0007669"/>
    <property type="project" value="UniProtKB-KW"/>
</dbReference>
<dbReference type="Gene3D" id="1.10.1200.270">
    <property type="entry name" value="Methyltransferase, alpha-helical capping domain"/>
    <property type="match status" value="1"/>
</dbReference>
<dbReference type="Gene3D" id="3.40.50.150">
    <property type="entry name" value="Vaccinia Virus protein VP39"/>
    <property type="match status" value="1"/>
</dbReference>
<dbReference type="InterPro" id="IPR005299">
    <property type="entry name" value="MeTrfase_7"/>
</dbReference>
<dbReference type="InterPro" id="IPR042086">
    <property type="entry name" value="MeTrfase_capping"/>
</dbReference>
<dbReference type="InterPro" id="IPR029063">
    <property type="entry name" value="SAM-dependent_MTases_sf"/>
</dbReference>
<dbReference type="PANTHER" id="PTHR31009">
    <property type="entry name" value="S-ADENOSYL-L-METHIONINE:CARBOXYL METHYLTRANSFERASE FAMILY PROTEIN"/>
    <property type="match status" value="1"/>
</dbReference>
<dbReference type="Pfam" id="PF03492">
    <property type="entry name" value="Methyltransf_7"/>
    <property type="match status" value="1"/>
</dbReference>
<dbReference type="SUPFAM" id="SSF53335">
    <property type="entry name" value="S-adenosyl-L-methionine-dependent methyltransferases"/>
    <property type="match status" value="1"/>
</dbReference>
<accession>A0A6C0WX00</accession>
<protein>
    <recommendedName>
        <fullName evidence="5">3,7-dimethylxanthine N-methyltransferase CkTbS</fullName>
        <ecNumber evidence="4">2.1.1.159</ecNumber>
    </recommendedName>
    <alternativeName>
        <fullName evidence="5">Theobromine synthase</fullName>
        <shortName evidence="5">CkTbS</shortName>
    </alternativeName>
</protein>
<keyword id="KW-0002">3D-structure</keyword>
<keyword id="KW-0017">Alkaloid metabolism</keyword>
<keyword id="KW-0460">Magnesium</keyword>
<keyword id="KW-0479">Metal-binding</keyword>
<keyword id="KW-0489">Methyltransferase</keyword>
<keyword id="KW-0949">S-adenosyl-L-methionine</keyword>
<keyword id="KW-0808">Transferase</keyword>